<accession>A8F9B7</accession>
<feature type="chain" id="PRO_1000058302" description="tRNA pseudouridine synthase A">
    <location>
        <begin position="1"/>
        <end position="247"/>
    </location>
</feature>
<feature type="active site" description="Nucleophile" evidence="1">
    <location>
        <position position="53"/>
    </location>
</feature>
<feature type="binding site" evidence="1">
    <location>
        <position position="111"/>
    </location>
    <ligand>
        <name>substrate</name>
    </ligand>
</feature>
<comment type="function">
    <text evidence="1">Formation of pseudouridine at positions 38, 39 and 40 in the anticodon stem and loop of transfer RNAs.</text>
</comment>
<comment type="catalytic activity">
    <reaction evidence="1">
        <text>uridine(38/39/40) in tRNA = pseudouridine(38/39/40) in tRNA</text>
        <dbReference type="Rhea" id="RHEA:22376"/>
        <dbReference type="Rhea" id="RHEA-COMP:10085"/>
        <dbReference type="Rhea" id="RHEA-COMP:10087"/>
        <dbReference type="ChEBI" id="CHEBI:65314"/>
        <dbReference type="ChEBI" id="CHEBI:65315"/>
        <dbReference type="EC" id="5.4.99.12"/>
    </reaction>
</comment>
<comment type="subunit">
    <text evidence="1">Homodimer.</text>
</comment>
<comment type="similarity">
    <text evidence="1">Belongs to the tRNA pseudouridine synthase TruA family.</text>
</comment>
<reference key="1">
    <citation type="journal article" date="2007" name="PLoS ONE">
        <title>Paradoxical DNA repair and peroxide resistance gene conservation in Bacillus pumilus SAFR-032.</title>
        <authorList>
            <person name="Gioia J."/>
            <person name="Yerrapragada S."/>
            <person name="Qin X."/>
            <person name="Jiang H."/>
            <person name="Igboeli O.C."/>
            <person name="Muzny D."/>
            <person name="Dugan-Rocha S."/>
            <person name="Ding Y."/>
            <person name="Hawes A."/>
            <person name="Liu W."/>
            <person name="Perez L."/>
            <person name="Kovar C."/>
            <person name="Dinh H."/>
            <person name="Lee S."/>
            <person name="Nazareth L."/>
            <person name="Blyth P."/>
            <person name="Holder M."/>
            <person name="Buhay C."/>
            <person name="Tirumalai M.R."/>
            <person name="Liu Y."/>
            <person name="Dasgupta I."/>
            <person name="Bokhetache L."/>
            <person name="Fujita M."/>
            <person name="Karouia F."/>
            <person name="Eswara Moorthy P."/>
            <person name="Siefert J."/>
            <person name="Uzman A."/>
            <person name="Buzumbo P."/>
            <person name="Verma A."/>
            <person name="Zwiya H."/>
            <person name="McWilliams B.D."/>
            <person name="Olowu A."/>
            <person name="Clinkenbeard K.D."/>
            <person name="Newcombe D."/>
            <person name="Golebiewski L."/>
            <person name="Petrosino J.F."/>
            <person name="Nicholson W.L."/>
            <person name="Fox G.E."/>
            <person name="Venkateswaran K."/>
            <person name="Highlander S.K."/>
            <person name="Weinstock G.M."/>
        </authorList>
    </citation>
    <scope>NUCLEOTIDE SEQUENCE [LARGE SCALE GENOMIC DNA]</scope>
    <source>
        <strain>SAFR-032</strain>
    </source>
</reference>
<gene>
    <name evidence="1" type="primary">truA</name>
    <name type="ordered locus">BPUM_0135</name>
</gene>
<name>TRUA_BACP2</name>
<sequence>MKVKCTVSYDGTHFKGYQVQPGQRTVQTEIESALAKMHKQDELVPIVASGRTDSGVHAKGQVIHFDTPLSIPMERWPFALNSLLPDDIRVLKAEEVDESFHARFSVVSKEYRYKVSTETHQNVFTRQYACHFPYRLDADKMREAAGYLIGTHDFTSFCAANTEVQDKVREIYTLEWKNVSDGLEMRVRGNGFLYNMVRIIAGTLLEVGSGKFHPDEIKAMLAARNREAAGKTAPSHGLYLWEVFYDN</sequence>
<protein>
    <recommendedName>
        <fullName evidence="1">tRNA pseudouridine synthase A</fullName>
        <ecNumber evidence="1">5.4.99.12</ecNumber>
    </recommendedName>
    <alternativeName>
        <fullName evidence="1">tRNA pseudouridine(38-40) synthase</fullName>
    </alternativeName>
    <alternativeName>
        <fullName evidence="1">tRNA pseudouridylate synthase I</fullName>
    </alternativeName>
    <alternativeName>
        <fullName evidence="1">tRNA-uridine isomerase I</fullName>
    </alternativeName>
</protein>
<evidence type="ECO:0000255" key="1">
    <source>
        <dbReference type="HAMAP-Rule" id="MF_00171"/>
    </source>
</evidence>
<organism>
    <name type="scientific">Bacillus pumilus (strain SAFR-032)</name>
    <dbReference type="NCBI Taxonomy" id="315750"/>
    <lineage>
        <taxon>Bacteria</taxon>
        <taxon>Bacillati</taxon>
        <taxon>Bacillota</taxon>
        <taxon>Bacilli</taxon>
        <taxon>Bacillales</taxon>
        <taxon>Bacillaceae</taxon>
        <taxon>Bacillus</taxon>
    </lineage>
</organism>
<proteinExistence type="inferred from homology"/>
<keyword id="KW-0413">Isomerase</keyword>
<keyword id="KW-0819">tRNA processing</keyword>
<dbReference type="EC" id="5.4.99.12" evidence="1"/>
<dbReference type="EMBL" id="CP000813">
    <property type="protein sequence ID" value="ABV60834.1"/>
    <property type="molecule type" value="Genomic_DNA"/>
</dbReference>
<dbReference type="RefSeq" id="WP_012008716.1">
    <property type="nucleotide sequence ID" value="NC_009848.4"/>
</dbReference>
<dbReference type="SMR" id="A8F9B7"/>
<dbReference type="STRING" id="315750.BPUM_0135"/>
<dbReference type="GeneID" id="5619377"/>
<dbReference type="KEGG" id="bpu:BPUM_0135"/>
<dbReference type="eggNOG" id="COG0101">
    <property type="taxonomic scope" value="Bacteria"/>
</dbReference>
<dbReference type="HOGENOM" id="CLU_014673_0_1_9"/>
<dbReference type="OrthoDB" id="9811823at2"/>
<dbReference type="Proteomes" id="UP000001355">
    <property type="component" value="Chromosome"/>
</dbReference>
<dbReference type="GO" id="GO:0003723">
    <property type="term" value="F:RNA binding"/>
    <property type="evidence" value="ECO:0007669"/>
    <property type="project" value="InterPro"/>
</dbReference>
<dbReference type="GO" id="GO:0160147">
    <property type="term" value="F:tRNA pseudouridine(38-40) synthase activity"/>
    <property type="evidence" value="ECO:0007669"/>
    <property type="project" value="UniProtKB-EC"/>
</dbReference>
<dbReference type="GO" id="GO:0031119">
    <property type="term" value="P:tRNA pseudouridine synthesis"/>
    <property type="evidence" value="ECO:0007669"/>
    <property type="project" value="UniProtKB-UniRule"/>
</dbReference>
<dbReference type="CDD" id="cd02570">
    <property type="entry name" value="PseudoU_synth_EcTruA"/>
    <property type="match status" value="1"/>
</dbReference>
<dbReference type="FunFam" id="3.30.70.580:FF:000001">
    <property type="entry name" value="tRNA pseudouridine synthase A"/>
    <property type="match status" value="1"/>
</dbReference>
<dbReference type="Gene3D" id="3.30.70.660">
    <property type="entry name" value="Pseudouridine synthase I, catalytic domain, C-terminal subdomain"/>
    <property type="match status" value="1"/>
</dbReference>
<dbReference type="Gene3D" id="3.30.70.580">
    <property type="entry name" value="Pseudouridine synthase I, catalytic domain, N-terminal subdomain"/>
    <property type="match status" value="1"/>
</dbReference>
<dbReference type="HAMAP" id="MF_00171">
    <property type="entry name" value="TruA"/>
    <property type="match status" value="1"/>
</dbReference>
<dbReference type="InterPro" id="IPR020103">
    <property type="entry name" value="PsdUridine_synth_cat_dom_sf"/>
</dbReference>
<dbReference type="InterPro" id="IPR001406">
    <property type="entry name" value="PsdUridine_synth_TruA"/>
</dbReference>
<dbReference type="InterPro" id="IPR020097">
    <property type="entry name" value="PsdUridine_synth_TruA_a/b_dom"/>
</dbReference>
<dbReference type="InterPro" id="IPR020095">
    <property type="entry name" value="PsdUridine_synth_TruA_C"/>
</dbReference>
<dbReference type="InterPro" id="IPR020094">
    <property type="entry name" value="TruA/RsuA/RluB/E/F_N"/>
</dbReference>
<dbReference type="NCBIfam" id="TIGR00071">
    <property type="entry name" value="hisT_truA"/>
    <property type="match status" value="1"/>
</dbReference>
<dbReference type="PANTHER" id="PTHR11142">
    <property type="entry name" value="PSEUDOURIDYLATE SYNTHASE"/>
    <property type="match status" value="1"/>
</dbReference>
<dbReference type="PANTHER" id="PTHR11142:SF0">
    <property type="entry name" value="TRNA PSEUDOURIDINE SYNTHASE-LIKE 1"/>
    <property type="match status" value="1"/>
</dbReference>
<dbReference type="Pfam" id="PF01416">
    <property type="entry name" value="PseudoU_synth_1"/>
    <property type="match status" value="2"/>
</dbReference>
<dbReference type="PIRSF" id="PIRSF001430">
    <property type="entry name" value="tRNA_psdUrid_synth"/>
    <property type="match status" value="1"/>
</dbReference>
<dbReference type="SUPFAM" id="SSF55120">
    <property type="entry name" value="Pseudouridine synthase"/>
    <property type="match status" value="1"/>
</dbReference>